<keyword id="KW-0012">Acyltransferase</keyword>
<keyword id="KW-0963">Cytoplasm</keyword>
<keyword id="KW-0441">Lipid A biosynthesis</keyword>
<keyword id="KW-0444">Lipid biosynthesis</keyword>
<keyword id="KW-0443">Lipid metabolism</keyword>
<keyword id="KW-1185">Reference proteome</keyword>
<keyword id="KW-0677">Repeat</keyword>
<keyword id="KW-0808">Transferase</keyword>
<comment type="function">
    <text evidence="1">Involved in the biosynthesis of lipid A, a phosphorylated glycolipid that anchors the lipopolysaccharide to the outer membrane of the cell.</text>
</comment>
<comment type="catalytic activity">
    <reaction evidence="1">
        <text>a (3R)-hydroxyacyl-[ACP] + UDP-N-acetyl-alpha-D-glucosamine = a UDP-3-O-[(3R)-3-hydroxyacyl]-N-acetyl-alpha-D-glucosamine + holo-[ACP]</text>
        <dbReference type="Rhea" id="RHEA:67812"/>
        <dbReference type="Rhea" id="RHEA-COMP:9685"/>
        <dbReference type="Rhea" id="RHEA-COMP:9945"/>
        <dbReference type="ChEBI" id="CHEBI:57705"/>
        <dbReference type="ChEBI" id="CHEBI:64479"/>
        <dbReference type="ChEBI" id="CHEBI:78827"/>
        <dbReference type="ChEBI" id="CHEBI:173225"/>
        <dbReference type="EC" id="2.3.1.129"/>
    </reaction>
</comment>
<comment type="pathway">
    <text evidence="1">Glycolipid biosynthesis; lipid IV(A) biosynthesis; lipid IV(A) from (3R)-3-hydroxytetradecanoyl-[acyl-carrier-protein] and UDP-N-acetyl-alpha-D-glucosamine: step 1/6.</text>
</comment>
<comment type="subunit">
    <text evidence="1">Homotrimer.</text>
</comment>
<comment type="subcellular location">
    <subcellularLocation>
        <location evidence="1">Cytoplasm</location>
    </subcellularLocation>
</comment>
<comment type="similarity">
    <text evidence="1">Belongs to the transferase hexapeptide repeat family. LpxA subfamily.</text>
</comment>
<proteinExistence type="inferred from homology"/>
<protein>
    <recommendedName>
        <fullName evidence="1">Acyl-[acyl-carrier-protein]--UDP-N-acetylglucosamine O-acyltransferase</fullName>
        <shortName evidence="1">UDP-N-acetylglucosamine acyltransferase</shortName>
        <ecNumber evidence="1">2.3.1.129</ecNumber>
    </recommendedName>
</protein>
<sequence length="271" mass="28381">MSTIAASAKIHPTAVVEDGAVIGENVVIGALAYVGPKVTLHDDVRLHNHAVVSGLTVIGRGSVVHPMAVIGGTPQAVRHDGSETTLEIGERCIMREGVTMNAGSSDGGGKTIVGDDNLFLANSHVAHDCRLGRHIILSNNVMLAGHVTIEDRAILGGGCAVHQFTRIGRQAFIGGLSAVNYDVIPYGMLNGNPGILGGLNVVGMTRSGIERADIHKVRRVYKAIFEAEGTIRGNAAAIDRNDYLDCPQALEIIDFIGAGSDRAISSPNRGK</sequence>
<organism>
    <name type="scientific">Agrobacterium fabrum (strain C58 / ATCC 33970)</name>
    <name type="common">Agrobacterium tumefaciens (strain C58)</name>
    <dbReference type="NCBI Taxonomy" id="176299"/>
    <lineage>
        <taxon>Bacteria</taxon>
        <taxon>Pseudomonadati</taxon>
        <taxon>Pseudomonadota</taxon>
        <taxon>Alphaproteobacteria</taxon>
        <taxon>Hyphomicrobiales</taxon>
        <taxon>Rhizobiaceae</taxon>
        <taxon>Rhizobium/Agrobacterium group</taxon>
        <taxon>Agrobacterium</taxon>
        <taxon>Agrobacterium tumefaciens complex</taxon>
    </lineage>
</organism>
<name>LPXA_AGRFC</name>
<reference key="1">
    <citation type="journal article" date="2001" name="Science">
        <title>The genome of the natural genetic engineer Agrobacterium tumefaciens C58.</title>
        <authorList>
            <person name="Wood D.W."/>
            <person name="Setubal J.C."/>
            <person name="Kaul R."/>
            <person name="Monks D.E."/>
            <person name="Kitajima J.P."/>
            <person name="Okura V.K."/>
            <person name="Zhou Y."/>
            <person name="Chen L."/>
            <person name="Wood G.E."/>
            <person name="Almeida N.F. Jr."/>
            <person name="Woo L."/>
            <person name="Chen Y."/>
            <person name="Paulsen I.T."/>
            <person name="Eisen J.A."/>
            <person name="Karp P.D."/>
            <person name="Bovee D. Sr."/>
            <person name="Chapman P."/>
            <person name="Clendenning J."/>
            <person name="Deatherage G."/>
            <person name="Gillet W."/>
            <person name="Grant C."/>
            <person name="Kutyavin T."/>
            <person name="Levy R."/>
            <person name="Li M.-J."/>
            <person name="McClelland E."/>
            <person name="Palmieri A."/>
            <person name="Raymond C."/>
            <person name="Rouse G."/>
            <person name="Saenphimmachak C."/>
            <person name="Wu Z."/>
            <person name="Romero P."/>
            <person name="Gordon D."/>
            <person name="Zhang S."/>
            <person name="Yoo H."/>
            <person name="Tao Y."/>
            <person name="Biddle P."/>
            <person name="Jung M."/>
            <person name="Krespan W."/>
            <person name="Perry M."/>
            <person name="Gordon-Kamm B."/>
            <person name="Liao L."/>
            <person name="Kim S."/>
            <person name="Hendrick C."/>
            <person name="Zhao Z.-Y."/>
            <person name="Dolan M."/>
            <person name="Chumley F."/>
            <person name="Tingey S.V."/>
            <person name="Tomb J.-F."/>
            <person name="Gordon M.P."/>
            <person name="Olson M.V."/>
            <person name="Nester E.W."/>
        </authorList>
    </citation>
    <scope>NUCLEOTIDE SEQUENCE [LARGE SCALE GENOMIC DNA]</scope>
    <source>
        <strain>C58 / ATCC 33970</strain>
    </source>
</reference>
<reference key="2">
    <citation type="journal article" date="2001" name="Science">
        <title>Genome sequence of the plant pathogen and biotechnology agent Agrobacterium tumefaciens C58.</title>
        <authorList>
            <person name="Goodner B."/>
            <person name="Hinkle G."/>
            <person name="Gattung S."/>
            <person name="Miller N."/>
            <person name="Blanchard M."/>
            <person name="Qurollo B."/>
            <person name="Goldman B.S."/>
            <person name="Cao Y."/>
            <person name="Askenazi M."/>
            <person name="Halling C."/>
            <person name="Mullin L."/>
            <person name="Houmiel K."/>
            <person name="Gordon J."/>
            <person name="Vaudin M."/>
            <person name="Iartchouk O."/>
            <person name="Epp A."/>
            <person name="Liu F."/>
            <person name="Wollam C."/>
            <person name="Allinger M."/>
            <person name="Doughty D."/>
            <person name="Scott C."/>
            <person name="Lappas C."/>
            <person name="Markelz B."/>
            <person name="Flanagan C."/>
            <person name="Crowell C."/>
            <person name="Gurson J."/>
            <person name="Lomo C."/>
            <person name="Sear C."/>
            <person name="Strub G."/>
            <person name="Cielo C."/>
            <person name="Slater S."/>
        </authorList>
    </citation>
    <scope>NUCLEOTIDE SEQUENCE [LARGE SCALE GENOMIC DNA]</scope>
    <source>
        <strain>C58 / ATCC 33970</strain>
    </source>
</reference>
<evidence type="ECO:0000255" key="1">
    <source>
        <dbReference type="HAMAP-Rule" id="MF_00387"/>
    </source>
</evidence>
<accession>Q8UFL3</accession>
<gene>
    <name evidence="1" type="primary">lpxA</name>
    <name type="ordered locus">Atu1384</name>
    <name type="ORF">AGR_C_2560</name>
</gene>
<dbReference type="EC" id="2.3.1.129" evidence="1"/>
<dbReference type="EMBL" id="AE007869">
    <property type="protein sequence ID" value="AAK87176.1"/>
    <property type="molecule type" value="Genomic_DNA"/>
</dbReference>
<dbReference type="PIR" id="AH2746">
    <property type="entry name" value="AH2746"/>
</dbReference>
<dbReference type="PIR" id="G97527">
    <property type="entry name" value="G97527"/>
</dbReference>
<dbReference type="RefSeq" id="NP_354391.1">
    <property type="nucleotide sequence ID" value="NC_003062.2"/>
</dbReference>
<dbReference type="RefSeq" id="WP_010971577.1">
    <property type="nucleotide sequence ID" value="NC_003062.2"/>
</dbReference>
<dbReference type="SMR" id="Q8UFL3"/>
<dbReference type="STRING" id="176299.Atu1384"/>
<dbReference type="EnsemblBacteria" id="AAK87176">
    <property type="protein sequence ID" value="AAK87176"/>
    <property type="gene ID" value="Atu1384"/>
</dbReference>
<dbReference type="GeneID" id="1133422"/>
<dbReference type="KEGG" id="atu:Atu1384"/>
<dbReference type="PATRIC" id="fig|176299.10.peg.1407"/>
<dbReference type="eggNOG" id="COG1043">
    <property type="taxonomic scope" value="Bacteria"/>
</dbReference>
<dbReference type="HOGENOM" id="CLU_061249_0_0_5"/>
<dbReference type="OrthoDB" id="9807278at2"/>
<dbReference type="PhylomeDB" id="Q8UFL3"/>
<dbReference type="BioCyc" id="AGRO:ATU1384-MONOMER"/>
<dbReference type="UniPathway" id="UPA00359">
    <property type="reaction ID" value="UER00477"/>
</dbReference>
<dbReference type="Proteomes" id="UP000000813">
    <property type="component" value="Chromosome circular"/>
</dbReference>
<dbReference type="GO" id="GO:0005737">
    <property type="term" value="C:cytoplasm"/>
    <property type="evidence" value="ECO:0007669"/>
    <property type="project" value="UniProtKB-SubCell"/>
</dbReference>
<dbReference type="GO" id="GO:0016020">
    <property type="term" value="C:membrane"/>
    <property type="evidence" value="ECO:0007669"/>
    <property type="project" value="GOC"/>
</dbReference>
<dbReference type="GO" id="GO:0008780">
    <property type="term" value="F:acyl-[acyl-carrier-protein]-UDP-N-acetylglucosamine O-acyltransferase activity"/>
    <property type="evidence" value="ECO:0007669"/>
    <property type="project" value="UniProtKB-UniRule"/>
</dbReference>
<dbReference type="GO" id="GO:0009245">
    <property type="term" value="P:lipid A biosynthetic process"/>
    <property type="evidence" value="ECO:0007669"/>
    <property type="project" value="UniProtKB-UniRule"/>
</dbReference>
<dbReference type="CDD" id="cd03351">
    <property type="entry name" value="LbH_UDP-GlcNAc_AT"/>
    <property type="match status" value="1"/>
</dbReference>
<dbReference type="Gene3D" id="2.160.10.10">
    <property type="entry name" value="Hexapeptide repeat proteins"/>
    <property type="match status" value="1"/>
</dbReference>
<dbReference type="Gene3D" id="1.20.1180.10">
    <property type="entry name" value="Udp N-acetylglucosamine O-acyltransferase, C-terminal domain"/>
    <property type="match status" value="1"/>
</dbReference>
<dbReference type="HAMAP" id="MF_00387">
    <property type="entry name" value="LpxA"/>
    <property type="match status" value="1"/>
</dbReference>
<dbReference type="InterPro" id="IPR029098">
    <property type="entry name" value="Acetyltransf_C"/>
</dbReference>
<dbReference type="InterPro" id="IPR037157">
    <property type="entry name" value="Acetyltransf_C_sf"/>
</dbReference>
<dbReference type="InterPro" id="IPR001451">
    <property type="entry name" value="Hexapep"/>
</dbReference>
<dbReference type="InterPro" id="IPR018357">
    <property type="entry name" value="Hexapep_transf_CS"/>
</dbReference>
<dbReference type="InterPro" id="IPR010137">
    <property type="entry name" value="Lipid_A_LpxA"/>
</dbReference>
<dbReference type="InterPro" id="IPR011004">
    <property type="entry name" value="Trimer_LpxA-like_sf"/>
</dbReference>
<dbReference type="NCBIfam" id="TIGR01852">
    <property type="entry name" value="lipid_A_lpxA"/>
    <property type="match status" value="1"/>
</dbReference>
<dbReference type="NCBIfam" id="NF003657">
    <property type="entry name" value="PRK05289.1"/>
    <property type="match status" value="1"/>
</dbReference>
<dbReference type="PANTHER" id="PTHR43480">
    <property type="entry name" value="ACYL-[ACYL-CARRIER-PROTEIN]--UDP-N-ACETYLGLUCOSAMINE O-ACYLTRANSFERASE"/>
    <property type="match status" value="1"/>
</dbReference>
<dbReference type="PANTHER" id="PTHR43480:SF1">
    <property type="entry name" value="ACYL-[ACYL-CARRIER-PROTEIN]--UDP-N-ACETYLGLUCOSAMINE O-ACYLTRANSFERASE, MITOCHONDRIAL-RELATED"/>
    <property type="match status" value="1"/>
</dbReference>
<dbReference type="Pfam" id="PF13720">
    <property type="entry name" value="Acetyltransf_11"/>
    <property type="match status" value="1"/>
</dbReference>
<dbReference type="Pfam" id="PF00132">
    <property type="entry name" value="Hexapep"/>
    <property type="match status" value="1"/>
</dbReference>
<dbReference type="PIRSF" id="PIRSF000456">
    <property type="entry name" value="UDP-GlcNAc_acltr"/>
    <property type="match status" value="1"/>
</dbReference>
<dbReference type="SUPFAM" id="SSF51161">
    <property type="entry name" value="Trimeric LpxA-like enzymes"/>
    <property type="match status" value="1"/>
</dbReference>
<dbReference type="PROSITE" id="PS00101">
    <property type="entry name" value="HEXAPEP_TRANSFERASES"/>
    <property type="match status" value="1"/>
</dbReference>
<feature type="chain" id="PRO_0000188032" description="Acyl-[acyl-carrier-protein]--UDP-N-acetylglucosamine O-acyltransferase">
    <location>
        <begin position="1"/>
        <end position="271"/>
    </location>
</feature>